<comment type="function">
    <text evidence="1">As a major component of focal adhesion plaques that links integrin to the actin cytoskeleton, may play an important role in cell adhesion. Recruits PIP5K1C to focal adhesion plaques and strongly activates its kinase activity (By similarity).</text>
</comment>
<comment type="subunit">
    <text evidence="5">Interacts directly with PIP5K1C.</text>
</comment>
<comment type="interaction">
    <interactant intactId="EBI-1220811">
        <id>Q9Y4G6</id>
    </interactant>
    <interactant intactId="EBI-375543">
        <id>P00519</id>
        <label>ABL1</label>
    </interactant>
    <organismsDiffer>false</organismsDiffer>
    <experiments>3</experiments>
</comment>
<comment type="interaction">
    <interactant intactId="EBI-1220811">
        <id>Q9Y4G6</id>
    </interactant>
    <interactant intactId="EBI-300173">
        <id>P05107</id>
        <label>ITGB2</label>
    </interactant>
    <organismsDiffer>false</organismsDiffer>
    <experiments>5</experiments>
</comment>
<comment type="subcellular location">
    <subcellularLocation>
        <location evidence="6">Cytoplasm</location>
    </subcellularLocation>
    <subcellularLocation>
        <location evidence="5">Cell junction</location>
        <location evidence="5">Focal adhesion</location>
    </subcellularLocation>
    <subcellularLocation>
        <location evidence="5">Synapse</location>
    </subcellularLocation>
    <subcellularLocation>
        <location>Cell membrane</location>
        <topology>Peripheral membrane protein</topology>
        <orientation evidence="5">Cytoplasmic side</orientation>
    </subcellularLocation>
    <subcellularLocation>
        <location evidence="5">Cytoplasm</location>
        <location evidence="5">Cytoskeleton</location>
    </subcellularLocation>
    <text evidence="5">Focal adhesion plaques and synapses (PubMed:12422219).</text>
</comment>
<gene>
    <name type="primary">TLN2</name>
    <name type="synonym">KIAA0320</name>
</gene>
<reference key="1">
    <citation type="journal article" date="2002" name="Nature">
        <title>Recruitment and regulation of phosphatidylinositol phosphate kinase type 1 gamma by the FERM domain of talin.</title>
        <authorList>
            <person name="Di Paolo G."/>
            <person name="Pellegrini L."/>
            <person name="Letinic K."/>
            <person name="Cestra G."/>
            <person name="Zoncu R."/>
            <person name="Voronov S."/>
            <person name="Chang S."/>
            <person name="Guo J."/>
            <person name="Wenk M.R."/>
            <person name="De Camilli P."/>
        </authorList>
    </citation>
    <scope>NUCLEOTIDE SEQUENCE [MRNA]</scope>
    <scope>INTERACTION WITH PIP5K1C</scope>
    <scope>SUBCELLULAR LOCATION</scope>
    <source>
        <tissue>Brain</tissue>
        <tissue>Skeletal muscle</tissue>
    </source>
</reference>
<reference key="2">
    <citation type="journal article" date="2001" name="Biochem. Biophys. Res. Commun.">
        <title>Analysis of the mammalian talin2 gene TLN2.</title>
        <authorList>
            <person name="Monkley S.J."/>
            <person name="Pritchard C.A."/>
            <person name="Critchley D.R."/>
        </authorList>
    </citation>
    <scope>NUCLEOTIDE SEQUENCE [MRNA]</scope>
</reference>
<reference key="3">
    <citation type="journal article" date="2006" name="Nature">
        <title>Analysis of the DNA sequence and duplication history of human chromosome 15.</title>
        <authorList>
            <person name="Zody M.C."/>
            <person name="Garber M."/>
            <person name="Sharpe T."/>
            <person name="Young S.K."/>
            <person name="Rowen L."/>
            <person name="O'Neill K."/>
            <person name="Whittaker C.A."/>
            <person name="Kamal M."/>
            <person name="Chang J.L."/>
            <person name="Cuomo C.A."/>
            <person name="Dewar K."/>
            <person name="FitzGerald M.G."/>
            <person name="Kodira C.D."/>
            <person name="Madan A."/>
            <person name="Qin S."/>
            <person name="Yang X."/>
            <person name="Abbasi N."/>
            <person name="Abouelleil A."/>
            <person name="Arachchi H.M."/>
            <person name="Baradarani L."/>
            <person name="Birditt B."/>
            <person name="Bloom S."/>
            <person name="Bloom T."/>
            <person name="Borowsky M.L."/>
            <person name="Burke J."/>
            <person name="Butler J."/>
            <person name="Cook A."/>
            <person name="DeArellano K."/>
            <person name="DeCaprio D."/>
            <person name="Dorris L. III"/>
            <person name="Dors M."/>
            <person name="Eichler E.E."/>
            <person name="Engels R."/>
            <person name="Fahey J."/>
            <person name="Fleetwood P."/>
            <person name="Friedman C."/>
            <person name="Gearin G."/>
            <person name="Hall J.L."/>
            <person name="Hensley G."/>
            <person name="Johnson E."/>
            <person name="Jones C."/>
            <person name="Kamat A."/>
            <person name="Kaur A."/>
            <person name="Locke D.P."/>
            <person name="Madan A."/>
            <person name="Munson G."/>
            <person name="Jaffe D.B."/>
            <person name="Lui A."/>
            <person name="Macdonald P."/>
            <person name="Mauceli E."/>
            <person name="Naylor J.W."/>
            <person name="Nesbitt R."/>
            <person name="Nicol R."/>
            <person name="O'Leary S.B."/>
            <person name="Ratcliffe A."/>
            <person name="Rounsley S."/>
            <person name="She X."/>
            <person name="Sneddon K.M.B."/>
            <person name="Stewart S."/>
            <person name="Sougnez C."/>
            <person name="Stone S.M."/>
            <person name="Topham K."/>
            <person name="Vincent D."/>
            <person name="Wang S."/>
            <person name="Zimmer A.R."/>
            <person name="Birren B.W."/>
            <person name="Hood L."/>
            <person name="Lander E.S."/>
            <person name="Nusbaum C."/>
        </authorList>
    </citation>
    <scope>NUCLEOTIDE SEQUENCE [LARGE SCALE GENOMIC DNA]</scope>
</reference>
<reference key="4">
    <citation type="journal article" date="1997" name="DNA Res.">
        <title>Prediction of the coding sequences of unidentified human genes. VII. The complete sequences of 100 new cDNA clones from brain which can code for large proteins in vitro.</title>
        <authorList>
            <person name="Nagase T."/>
            <person name="Ishikawa K."/>
            <person name="Nakajima D."/>
            <person name="Ohira M."/>
            <person name="Seki N."/>
            <person name="Miyajima N."/>
            <person name="Tanaka A."/>
            <person name="Kotani H."/>
            <person name="Nomura N."/>
            <person name="Ohara O."/>
        </authorList>
    </citation>
    <scope>NUCLEOTIDE SEQUENCE [LARGE SCALE MRNA] OF 610-2542</scope>
    <source>
        <tissue>Brain</tissue>
    </source>
</reference>
<reference key="5">
    <citation type="journal article" date="2002" name="DNA Res.">
        <title>Construction of expression-ready cDNA clones for KIAA genes: manual curation of 330 KIAA cDNA clones.</title>
        <authorList>
            <person name="Nakajima D."/>
            <person name="Okazaki N."/>
            <person name="Yamakawa H."/>
            <person name="Kikuno R."/>
            <person name="Ohara O."/>
            <person name="Nagase T."/>
        </authorList>
    </citation>
    <scope>SEQUENCE REVISION</scope>
</reference>
<reference key="6">
    <citation type="journal article" date="2006" name="Nat. Biotechnol.">
        <title>A probability-based approach for high-throughput protein phosphorylation analysis and site localization.</title>
        <authorList>
            <person name="Beausoleil S.A."/>
            <person name="Villen J."/>
            <person name="Gerber S.A."/>
            <person name="Rush J."/>
            <person name="Gygi S.P."/>
        </authorList>
    </citation>
    <scope>PHOSPHORYLATION [LARGE SCALE ANALYSIS] AT THR-1843</scope>
    <scope>IDENTIFICATION BY MASS SPECTROMETRY [LARGE SCALE ANALYSIS]</scope>
    <source>
        <tissue>Cervix carcinoma</tissue>
    </source>
</reference>
<reference key="7">
    <citation type="journal article" date="2008" name="Proc. Natl. Acad. Sci. U.S.A.">
        <title>A quantitative atlas of mitotic phosphorylation.</title>
        <authorList>
            <person name="Dephoure N."/>
            <person name="Zhou C."/>
            <person name="Villen J."/>
            <person name="Beausoleil S.A."/>
            <person name="Bakalarski C.E."/>
            <person name="Elledge S.J."/>
            <person name="Gygi S.P."/>
        </authorList>
    </citation>
    <scope>IDENTIFICATION BY MASS SPECTROMETRY [LARGE SCALE ANALYSIS]</scope>
    <source>
        <tissue>Cervix carcinoma</tissue>
    </source>
</reference>
<reference key="8">
    <citation type="journal article" date="2009" name="Anal. Chem.">
        <title>Lys-N and trypsin cover complementary parts of the phosphoproteome in a refined SCX-based approach.</title>
        <authorList>
            <person name="Gauci S."/>
            <person name="Helbig A.O."/>
            <person name="Slijper M."/>
            <person name="Krijgsveld J."/>
            <person name="Heck A.J."/>
            <person name="Mohammed S."/>
        </authorList>
    </citation>
    <scope>IDENTIFICATION BY MASS SPECTROMETRY [LARGE SCALE ANALYSIS]</scope>
</reference>
<reference key="9">
    <citation type="journal article" date="2011" name="BMC Syst. Biol.">
        <title>Initial characterization of the human central proteome.</title>
        <authorList>
            <person name="Burkard T.R."/>
            <person name="Planyavsky M."/>
            <person name="Kaupe I."/>
            <person name="Breitwieser F.P."/>
            <person name="Buerckstuemmer T."/>
            <person name="Bennett K.L."/>
            <person name="Superti-Furga G."/>
            <person name="Colinge J."/>
        </authorList>
    </citation>
    <scope>IDENTIFICATION BY MASS SPECTROMETRY [LARGE SCALE ANALYSIS]</scope>
</reference>
<reference key="10">
    <citation type="journal article" date="2011" name="Sci. Signal.">
        <title>System-wide temporal characterization of the proteome and phosphoproteome of human embryonic stem cell differentiation.</title>
        <authorList>
            <person name="Rigbolt K.T."/>
            <person name="Prokhorova T.A."/>
            <person name="Akimov V."/>
            <person name="Henningsen J."/>
            <person name="Johansen P.T."/>
            <person name="Kratchmarova I."/>
            <person name="Kassem M."/>
            <person name="Mann M."/>
            <person name="Olsen J.V."/>
            <person name="Blagoev B."/>
        </authorList>
    </citation>
    <scope>PHOSPHORYLATION [LARGE SCALE ANALYSIS] AT THR-1843</scope>
    <scope>IDENTIFICATION BY MASS SPECTROMETRY [LARGE SCALE ANALYSIS]</scope>
</reference>
<reference key="11">
    <citation type="journal article" date="2013" name="J. Proteome Res.">
        <title>Toward a comprehensive characterization of a human cancer cell phosphoproteome.</title>
        <authorList>
            <person name="Zhou H."/>
            <person name="Di Palma S."/>
            <person name="Preisinger C."/>
            <person name="Peng M."/>
            <person name="Polat A.N."/>
            <person name="Heck A.J."/>
            <person name="Mohammed S."/>
        </authorList>
    </citation>
    <scope>PHOSPHORYLATION [LARGE SCALE ANALYSIS] AT THR-1843</scope>
    <scope>IDENTIFICATION BY MASS SPECTROMETRY [LARGE SCALE ANALYSIS]</scope>
    <source>
        <tissue>Cervix carcinoma</tissue>
    </source>
</reference>
<reference key="12">
    <citation type="journal article" date="2014" name="J. Proteomics">
        <title>An enzyme assisted RP-RPLC approach for in-depth analysis of human liver phosphoproteome.</title>
        <authorList>
            <person name="Bian Y."/>
            <person name="Song C."/>
            <person name="Cheng K."/>
            <person name="Dong M."/>
            <person name="Wang F."/>
            <person name="Huang J."/>
            <person name="Sun D."/>
            <person name="Wang L."/>
            <person name="Ye M."/>
            <person name="Zou H."/>
        </authorList>
    </citation>
    <scope>PHOSPHORYLATION [LARGE SCALE ANALYSIS] AT SER-1023 AND THR-1843</scope>
    <scope>IDENTIFICATION BY MASS SPECTROMETRY [LARGE SCALE ANALYSIS]</scope>
    <source>
        <tissue>Liver</tissue>
    </source>
</reference>
<reference key="13">
    <citation type="journal article" date="2015" name="Proteomics">
        <title>N-terminome analysis of the human mitochondrial proteome.</title>
        <authorList>
            <person name="Vaca Jacome A.S."/>
            <person name="Rabilloud T."/>
            <person name="Schaeffer-Reiss C."/>
            <person name="Rompais M."/>
            <person name="Ayoub D."/>
            <person name="Lane L."/>
            <person name="Bairoch A."/>
            <person name="Van Dorsselaer A."/>
            <person name="Carapito C."/>
        </authorList>
    </citation>
    <scope>IDENTIFICATION BY MASS SPECTROMETRY [LARGE SCALE ANALYSIS]</scope>
</reference>
<reference key="14">
    <citation type="journal article" date="2016" name="PLoS ONE">
        <title>Exome Sequencing of a Pedigree Reveals S339L Mutation in the TLN2 Gene as a Cause of Fifth Finger Camptodactyly.</title>
        <authorList>
            <person name="Deng H."/>
            <person name="Deng S."/>
            <person name="Xu H."/>
            <person name="Deng H.X."/>
            <person name="Chen Y."/>
            <person name="Yuan L."/>
            <person name="Deng X."/>
            <person name="Yang S."/>
            <person name="Guan L."/>
            <person name="Zhang J."/>
            <person name="Yuan H."/>
            <person name="Guo Y."/>
        </authorList>
    </citation>
    <scope>VARIANT LEU-339</scope>
    <scope>SUBCELLULAR LOCATION</scope>
</reference>
<feature type="chain" id="PRO_0000219431" description="Talin-2">
    <location>
        <begin position="1"/>
        <end position="2542"/>
    </location>
</feature>
<feature type="domain" description="FERM" evidence="3">
    <location>
        <begin position="88"/>
        <end position="406"/>
    </location>
</feature>
<feature type="domain" description="I/LWEQ" evidence="4">
    <location>
        <begin position="2294"/>
        <end position="2533"/>
    </location>
</feature>
<feature type="region of interest" description="Interaction with PIP5K1C" evidence="1">
    <location>
        <begin position="312"/>
        <end position="406"/>
    </location>
</feature>
<feature type="modified residue" description="Phosphoserine" evidence="2">
    <location>
        <position position="428"/>
    </location>
</feature>
<feature type="modified residue" description="Phosphoserine" evidence="2">
    <location>
        <position position="449"/>
    </location>
</feature>
<feature type="modified residue" description="Phosphoserine" evidence="2">
    <location>
        <position position="623"/>
    </location>
</feature>
<feature type="modified residue" description="Phosphoserine" evidence="11">
    <location>
        <position position="1023"/>
    </location>
</feature>
<feature type="modified residue" description="Phosphotyrosine" evidence="2">
    <location>
        <position position="1665"/>
    </location>
</feature>
<feature type="modified residue" description="Phosphothreonine" evidence="8 9 10 11">
    <location>
        <position position="1843"/>
    </location>
</feature>
<feature type="sequence variant" id="VAR_076545" description="Found in patients with fifth finger camptodactyly syndrome; uncertain significance; dbSNP:rs1343670062." evidence="6">
    <original>S</original>
    <variation>L</variation>
    <location>
        <position position="339"/>
    </location>
</feature>
<feature type="sequence variant" id="VAR_055313" description="In dbSNP:rs11634784.">
    <original>V</original>
    <variation>A</variation>
    <location>
        <position position="340"/>
    </location>
</feature>
<feature type="sequence variant" id="VAR_014432" description="In dbSNP:rs2280279.">
    <original>A</original>
    <variation>S</variation>
    <location>
        <position position="1148"/>
    </location>
</feature>
<feature type="sequence variant" id="VAR_059136" description="In dbSNP:rs2280279.">
    <original>A</original>
    <variation>T</variation>
    <location>
        <position position="1148"/>
    </location>
</feature>
<feature type="sequence variant" id="VAR_055314" description="In dbSNP:rs7182971.">
    <original>V</original>
    <variation>I</variation>
    <location>
        <position position="1877"/>
    </location>
</feature>
<feature type="sequence variant" id="VAR_055315" description="In dbSNP:rs11633796.">
    <original>T</original>
    <variation>I</variation>
    <location>
        <position position="2144"/>
    </location>
</feature>
<feature type="sequence variant" id="VAR_014433" description="In dbSNP:rs3816988.">
    <original>F</original>
    <variation>L</variation>
    <location>
        <position position="2266"/>
    </location>
</feature>
<feature type="sequence conflict" description="In Ref. 1; AAM73764." evidence="7" ref="1">
    <original>E</original>
    <variation>A</variation>
    <location>
        <position position="285"/>
    </location>
</feature>
<feature type="sequence conflict" description="In Ref. 1; AAM73764." evidence="7" ref="1">
    <original>L</original>
    <variation>F</variation>
    <location>
        <position position="1269"/>
    </location>
</feature>
<feature type="strand" evidence="12">
    <location>
        <begin position="4"/>
        <end position="10"/>
    </location>
</feature>
<feature type="turn" evidence="12">
    <location>
        <begin position="11"/>
        <end position="14"/>
    </location>
</feature>
<feature type="strand" evidence="12">
    <location>
        <begin position="15"/>
        <end position="21"/>
    </location>
</feature>
<feature type="helix" evidence="12">
    <location>
        <begin position="27"/>
        <end position="37"/>
    </location>
</feature>
<feature type="helix" evidence="12">
    <location>
        <begin position="39"/>
        <end position="41"/>
    </location>
</feature>
<feature type="helix" evidence="12">
    <location>
        <begin position="46"/>
        <end position="48"/>
    </location>
</feature>
<feature type="strand" evidence="12">
    <location>
        <begin position="49"/>
        <end position="54"/>
    </location>
</feature>
<feature type="strand" evidence="12">
    <location>
        <begin position="61"/>
        <end position="63"/>
    </location>
</feature>
<feature type="helix" evidence="12">
    <location>
        <begin position="70"/>
        <end position="73"/>
    </location>
</feature>
<feature type="strand" evidence="12">
    <location>
        <begin position="80"/>
        <end position="85"/>
    </location>
</feature>
<feature type="strand" evidence="12">
    <location>
        <begin position="87"/>
        <end position="93"/>
    </location>
</feature>
<feature type="strand" evidence="12">
    <location>
        <begin position="99"/>
        <end position="105"/>
    </location>
</feature>
<feature type="helix" evidence="12">
    <location>
        <begin position="110"/>
        <end position="119"/>
    </location>
</feature>
<feature type="turn" evidence="12">
    <location>
        <begin position="120"/>
        <end position="122"/>
    </location>
</feature>
<feature type="helix" evidence="12">
    <location>
        <begin position="126"/>
        <end position="128"/>
    </location>
</feature>
<feature type="strand" evidence="12">
    <location>
        <begin position="129"/>
        <end position="132"/>
    </location>
</feature>
<feature type="helix" evidence="12">
    <location>
        <begin position="157"/>
        <end position="166"/>
    </location>
</feature>
<feature type="turn" evidence="12">
    <location>
        <begin position="182"/>
        <end position="186"/>
    </location>
</feature>
<feature type="strand" evidence="12">
    <location>
        <begin position="192"/>
        <end position="197"/>
    </location>
</feature>
<feature type="helix" evidence="12">
    <location>
        <begin position="204"/>
        <end position="206"/>
    </location>
</feature>
<feature type="helix" evidence="12">
    <location>
        <begin position="211"/>
        <end position="226"/>
    </location>
</feature>
<feature type="helix" evidence="12">
    <location>
        <begin position="234"/>
        <end position="249"/>
    </location>
</feature>
<feature type="turn" evidence="12">
    <location>
        <begin position="254"/>
        <end position="256"/>
    </location>
</feature>
<feature type="helix" evidence="12">
    <location>
        <begin position="264"/>
        <end position="266"/>
    </location>
</feature>
<feature type="helix" evidence="12">
    <location>
        <begin position="270"/>
        <end position="272"/>
    </location>
</feature>
<feature type="helix" evidence="12">
    <location>
        <begin position="278"/>
        <end position="288"/>
    </location>
</feature>
<feature type="turn" evidence="12">
    <location>
        <begin position="289"/>
        <end position="291"/>
    </location>
</feature>
<feature type="helix" evidence="12">
    <location>
        <begin position="294"/>
        <end position="307"/>
    </location>
</feature>
<feature type="turn" evidence="12">
    <location>
        <begin position="309"/>
        <end position="312"/>
    </location>
</feature>
<feature type="strand" evidence="12">
    <location>
        <begin position="314"/>
        <end position="322"/>
    </location>
</feature>
<feature type="strand" evidence="12">
    <location>
        <begin position="325"/>
        <end position="335"/>
    </location>
</feature>
<feature type="strand" evidence="12">
    <location>
        <begin position="337"/>
        <end position="344"/>
    </location>
</feature>
<feature type="turn" evidence="12">
    <location>
        <begin position="345"/>
        <end position="347"/>
    </location>
</feature>
<feature type="strand" evidence="12">
    <location>
        <begin position="350"/>
        <end position="355"/>
    </location>
</feature>
<feature type="helix" evidence="12">
    <location>
        <begin position="356"/>
        <end position="358"/>
    </location>
</feature>
<feature type="strand" evidence="12">
    <location>
        <begin position="359"/>
        <end position="364"/>
    </location>
</feature>
<feature type="strand" evidence="12">
    <location>
        <begin position="366"/>
        <end position="375"/>
    </location>
</feature>
<feature type="strand" evidence="12">
    <location>
        <begin position="381"/>
        <end position="384"/>
    </location>
</feature>
<feature type="helix" evidence="12">
    <location>
        <begin position="388"/>
        <end position="399"/>
    </location>
</feature>
<evidence type="ECO:0000250" key="1"/>
<evidence type="ECO:0000250" key="2">
    <source>
        <dbReference type="UniProtKB" id="Q71LX4"/>
    </source>
</evidence>
<evidence type="ECO:0000255" key="3">
    <source>
        <dbReference type="PROSITE-ProRule" id="PRU00084"/>
    </source>
</evidence>
<evidence type="ECO:0000255" key="4">
    <source>
        <dbReference type="PROSITE-ProRule" id="PRU00292"/>
    </source>
</evidence>
<evidence type="ECO:0000269" key="5">
    <source>
    </source>
</evidence>
<evidence type="ECO:0000269" key="6">
    <source>
    </source>
</evidence>
<evidence type="ECO:0000305" key="7"/>
<evidence type="ECO:0007744" key="8">
    <source>
    </source>
</evidence>
<evidence type="ECO:0007744" key="9">
    <source>
    </source>
</evidence>
<evidence type="ECO:0007744" key="10">
    <source>
    </source>
</evidence>
<evidence type="ECO:0007744" key="11">
    <source>
    </source>
</evidence>
<evidence type="ECO:0007829" key="12">
    <source>
        <dbReference type="PDB" id="6U4K"/>
    </source>
</evidence>
<keyword id="KW-0002">3D-structure</keyword>
<keyword id="KW-0965">Cell junction</keyword>
<keyword id="KW-1003">Cell membrane</keyword>
<keyword id="KW-0963">Cytoplasm</keyword>
<keyword id="KW-0206">Cytoskeleton</keyword>
<keyword id="KW-0472">Membrane</keyword>
<keyword id="KW-0597">Phosphoprotein</keyword>
<keyword id="KW-1267">Proteomics identification</keyword>
<keyword id="KW-1185">Reference proteome</keyword>
<keyword id="KW-0770">Synapse</keyword>
<name>TLN2_HUMAN</name>
<sequence length="2542" mass="271613">MVALSLKICVRHCNVVKTMQFEPSTAVYDACRVIRERVPEAQTGQASDYGLFLSDEDPRKGIWLEAGRTLDYYMLRNGDILEYKKKQRPQKIRMLDGSVKTVMVDDSKTVGELLVTICSRIGITNYEEYSLIQETIEEKKEEGTGTLKKDRTLLRDERKMEKLKAKLHTDDDLNWLDHSRTFREQGVDENETLLLRRKFFYSDQNVDSRDPVQLNLLYVQARDDILNGSHPVSFEKACEFGGFQAQIQFGPHVEHKHKPGFLDLKEFLPKEYIKQRGAEKRIFQEHKNCGEMSEIEAKVKYVKLARSLRTYGVSFFLVKEKMKGKNKLVPRLLGITKDSVMRVDEKTKEVLQEWPLTTVKRWAASPKSFTLDFGEYQESYYSVQTTEGEQISQLIAGYIDIILKKKQSKDRFGLEGDEESTMLEESVSPKKSTILQQQFNRTGKAEHGSVALPAVMRSGSSGPETFNVGSMPSPQQQVMVGQMHRGHMPPLTSAQQALMGTINTSMHAVQQAQDDLSELDSLPPLGQDMASRVWVQNKVDESKHEIHSQVDAITAGTASVVNLTAGDPADTDYTAVGCAITTISSNLTEMSKGVKLLAALMDDEVGSGEDLLRAARTLAGAVSDLLKAVQPTSGEPRQTVLTAAGSIGQASGDLLRQIGENETDERFQDVLMSLAKAVANAAAMLVLKAKNVAQVAEDTVLQNRVIAAATQCALSTSQLVACAKVVSPTISSPVCQEQLIEAGKLVDRSVENCVRACQAATTDSELLKQVSAAASVVSQALHDLLQHVRQFASRGEPIGRYDQATDTIMCVTESIFSSMGDAGEMVRQARVLAQATSDLVNAMRSDAEAEIDMENSKKLLAAAKLLADSTARMVEAAKGAAANPENEDQQQRLREAAEGLRVATNAAAQNAIKKKIVNRLEVAAKQAAAAATQTIAASQNAAVSNKNPAAQQQLVQSCKAVADHIPQLVQGVRGSQAQAEDLSAQLALIISSQNFLQPGSKMVSSAKAAVPTVSDQAAAMQLSQCAKNLATSLAELRTASQKAHEACGPMEIDSALNTVQTLKNELQDAKMAAVESQLKPLPGETLEKCAQDLGSTSKAVGSSMAQLLTCAAQGNEHYTGVAARETAQALKTLAQAARGVAASTTDPAAAHAMLDSARDVMEGSAMLIQEAKQALIAPGDAERQQRLAQVAKAVSHSLNNCVNCLPGQKDVDVALKSIGESSKKLLVDSLPPSTKPFQEAQSELNQAAADLNQSAGEVVHATRGQSGELAAASGKFSDDFDEFLDAGIEMAGQAQTKEDQIQVIGNLKNISMASSKLLLAAKSLSVDPGAPNAKNLLAAAARAVTESINQLITLCTQQAPGQKECDNALRELETVKGMLDNPNEPVSDLSYFDCIESVMENSKVLGESMAGISQNAKTGDLPAFGECVGIASKALCGLTEAAAQAAYLVGISDPNSQAGHQGLVDPIQFARANQAIQMACQNLVDPGSSPSQVLSAATIVAKHTSALCNACRIASSKTANPVAKRHFVQSAKEVANSTANLVKTIKALDGDFSEDNRNKCRIATAPLIEAVENLTAFASNPEFVSIPAQISSEGSQAQEPILVSAKTMLESSSYLIRTARSLAINPKDPPTWSVLAGHSHTVSDSIKSLITSIRDKAPGQRECDYSIDGINRCIRDIEQASLAAVSQSLATRDDISVEALQEQLTSVVQEIGHLIDPIATAARGEAAQLGHKVTQLASYFEPLILAAVGVASKILDHQQQMTVLDQTKTLAESALQMLYAAKEGGGNPKAQHTHDAITEAAQLMKEAVDDIMVTLNEAASEVGLVGGMVDAIAEAMSKLDEGTPPEPKGTFVDYQTTVVKYSKAIAVTAQEMMTKSVTNPEELGGLASQMTSDYGHLAFQGQMAAATAEPEEIGFQIRTRVQDLGHGCIFLVQKAGALQVCPTDSYTKRELIECARAVTEKVSLVLSALQAGNKGTQACITAATAVSGIIADLDTTIMFATAGTLNAENSETFADHRENILKTAKALVEDTKLLVSGAASTPDKLAQAAQSSAATITQLAEVVKLGAASLGSDDPETQVVLINAIKDVAKALSDLISATKGAASKPVDDPSMYQLKGAAKVMVTNVTSLLKTVKAVEDEATRGTRALEATIECIKQELTVFQSKDVPEKTSSPEESIRMTKGITMATAKAVAAGNSCRQEDVIATANLSRKAVSDMLTACKQASFHPDVSDEVRTRALRFGTECTLGYLDLLEHVLVILQKPTPEFKQQLAAFSKRVAGAVTELIQAAEAMKGTEWVDPEDPTVIAETELLGAAASIEAAAKKLEQLKPRAKPKQADETLDFEEQILEAAKSIAAATSALVKSASAAQRELVAQGKVGSIPANAADDGQWSQGLISAARMVAAATSSLCEAANASVQGHASEEKLISSAKQVAASTAQLLVACKVKADQDSEAMRRLQAAGNAVKRASDNLVRAAQKAAFGKADDDDVVVKTKFVGGIAQIIAAQEEMLKKERELEEARKKLAQIRQQQYKFLPTELREDEG</sequence>
<organism>
    <name type="scientific">Homo sapiens</name>
    <name type="common">Human</name>
    <dbReference type="NCBI Taxonomy" id="9606"/>
    <lineage>
        <taxon>Eukaryota</taxon>
        <taxon>Metazoa</taxon>
        <taxon>Chordata</taxon>
        <taxon>Craniata</taxon>
        <taxon>Vertebrata</taxon>
        <taxon>Euteleostomi</taxon>
        <taxon>Mammalia</taxon>
        <taxon>Eutheria</taxon>
        <taxon>Euarchontoglires</taxon>
        <taxon>Primates</taxon>
        <taxon>Haplorrhini</taxon>
        <taxon>Catarrhini</taxon>
        <taxon>Hominidae</taxon>
        <taxon>Homo</taxon>
    </lineage>
</organism>
<protein>
    <recommendedName>
        <fullName>Talin-2</fullName>
    </recommendedName>
</protein>
<accession>Q9Y4G6</accession>
<accession>A6NLB8</accession>
<dbReference type="EMBL" id="AF402000">
    <property type="protein sequence ID" value="AAM73764.1"/>
    <property type="molecule type" value="mRNA"/>
</dbReference>
<dbReference type="EMBL" id="AC068233">
    <property type="status" value="NOT_ANNOTATED_CDS"/>
    <property type="molecule type" value="Genomic_DNA"/>
</dbReference>
<dbReference type="EMBL" id="AC100839">
    <property type="status" value="NOT_ANNOTATED_CDS"/>
    <property type="molecule type" value="Genomic_DNA"/>
</dbReference>
<dbReference type="EMBL" id="AC103740">
    <property type="status" value="NOT_ANNOTATED_CDS"/>
    <property type="molecule type" value="Genomic_DNA"/>
</dbReference>
<dbReference type="EMBL" id="AB002318">
    <property type="protein sequence ID" value="BAA20778.2"/>
    <property type="molecule type" value="mRNA"/>
</dbReference>
<dbReference type="CCDS" id="CCDS32261.1"/>
<dbReference type="RefSeq" id="NP_001381476.1">
    <property type="nucleotide sequence ID" value="NM_001394547.1"/>
</dbReference>
<dbReference type="RefSeq" id="NP_055874.2">
    <property type="nucleotide sequence ID" value="NM_015059.3"/>
</dbReference>
<dbReference type="RefSeq" id="XP_016878157.1">
    <property type="nucleotide sequence ID" value="XM_017022668.1"/>
</dbReference>
<dbReference type="PDB" id="6U4K">
    <property type="method" value="X-ray"/>
    <property type="resolution" value="2.56 A"/>
    <property type="chains" value="A=1-403"/>
</dbReference>
<dbReference type="PDBsum" id="6U4K"/>
<dbReference type="SMR" id="Q9Y4G6"/>
<dbReference type="BioGRID" id="123717">
    <property type="interactions" value="55"/>
</dbReference>
<dbReference type="DIP" id="DIP-17039N"/>
<dbReference type="FunCoup" id="Q9Y4G6">
    <property type="interactions" value="1062"/>
</dbReference>
<dbReference type="IntAct" id="Q9Y4G6">
    <property type="interactions" value="25"/>
</dbReference>
<dbReference type="MINT" id="Q9Y4G6"/>
<dbReference type="STRING" id="9606.ENSP00000453508"/>
<dbReference type="TCDB" id="8.A.25.1.7">
    <property type="family name" value="the ezrin/radixin/moesin (ezrin) family"/>
</dbReference>
<dbReference type="GlyCosmos" id="Q9Y4G6">
    <property type="glycosylation" value="1 site, 1 glycan"/>
</dbReference>
<dbReference type="GlyGen" id="Q9Y4G6">
    <property type="glycosylation" value="7 sites, 2 N-linked glycans (2 sites), 1 O-linked glycan (3 sites)"/>
</dbReference>
<dbReference type="iPTMnet" id="Q9Y4G6"/>
<dbReference type="PhosphoSitePlus" id="Q9Y4G6"/>
<dbReference type="SwissPalm" id="Q9Y4G6"/>
<dbReference type="BioMuta" id="TLN2"/>
<dbReference type="DMDM" id="229463036"/>
<dbReference type="jPOST" id="Q9Y4G6"/>
<dbReference type="MassIVE" id="Q9Y4G6"/>
<dbReference type="PaxDb" id="9606-ENSP00000453508"/>
<dbReference type="PeptideAtlas" id="Q9Y4G6"/>
<dbReference type="ProteomicsDB" id="86203"/>
<dbReference type="Pumba" id="Q9Y4G6"/>
<dbReference type="Antibodypedia" id="25560">
    <property type="antibodies" value="199 antibodies from 23 providers"/>
</dbReference>
<dbReference type="DNASU" id="83660"/>
<dbReference type="Ensembl" id="ENST00000561311.5">
    <property type="protein sequence ID" value="ENSP00000453508.1"/>
    <property type="gene ID" value="ENSG00000171914.17"/>
</dbReference>
<dbReference type="Ensembl" id="ENST00000636159.2">
    <property type="protein sequence ID" value="ENSP00000490662.2"/>
    <property type="gene ID" value="ENSG00000171914.17"/>
</dbReference>
<dbReference type="GeneID" id="83660"/>
<dbReference type="KEGG" id="hsa:83660"/>
<dbReference type="MANE-Select" id="ENST00000636159.2">
    <property type="protein sequence ID" value="ENSP00000490662.2"/>
    <property type="RefSeq nucleotide sequence ID" value="NM_015059.3"/>
    <property type="RefSeq protein sequence ID" value="NP_055874.2"/>
</dbReference>
<dbReference type="UCSC" id="uc002alb.5">
    <property type="organism name" value="human"/>
</dbReference>
<dbReference type="AGR" id="HGNC:15447"/>
<dbReference type="CTD" id="83660"/>
<dbReference type="DisGeNET" id="83660"/>
<dbReference type="GeneCards" id="TLN2"/>
<dbReference type="HGNC" id="HGNC:15447">
    <property type="gene designation" value="TLN2"/>
</dbReference>
<dbReference type="HPA" id="ENSG00000171914">
    <property type="expression patterns" value="Tissue enhanced (kidney)"/>
</dbReference>
<dbReference type="MIM" id="607349">
    <property type="type" value="gene"/>
</dbReference>
<dbReference type="neXtProt" id="NX_Q9Y4G6"/>
<dbReference type="OpenTargets" id="ENSG00000171914"/>
<dbReference type="PharmGKB" id="PA37958"/>
<dbReference type="VEuPathDB" id="HostDB:ENSG00000171914"/>
<dbReference type="eggNOG" id="KOG4261">
    <property type="taxonomic scope" value="Eukaryota"/>
</dbReference>
<dbReference type="GeneTree" id="ENSGT00940000154699"/>
<dbReference type="HOGENOM" id="CLU_000364_1_1_1"/>
<dbReference type="InParanoid" id="Q9Y4G6"/>
<dbReference type="OMA" id="NMVKHSK"/>
<dbReference type="OrthoDB" id="10262320at2759"/>
<dbReference type="PAN-GO" id="Q9Y4G6">
    <property type="GO annotations" value="4 GO annotations based on evolutionary models"/>
</dbReference>
<dbReference type="PhylomeDB" id="Q9Y4G6"/>
<dbReference type="TreeFam" id="TF314677"/>
<dbReference type="PathwayCommons" id="Q9Y4G6"/>
<dbReference type="SignaLink" id="Q9Y4G6"/>
<dbReference type="BioGRID-ORCS" id="83660">
    <property type="hits" value="12 hits in 1147 CRISPR screens"/>
</dbReference>
<dbReference type="CD-CODE" id="FB4E32DD">
    <property type="entry name" value="Presynaptic clusters and postsynaptic densities"/>
</dbReference>
<dbReference type="ChiTaRS" id="TLN2">
    <property type="organism name" value="human"/>
</dbReference>
<dbReference type="GeneWiki" id="TLN2"/>
<dbReference type="GenomeRNAi" id="83660"/>
<dbReference type="Pharos" id="Q9Y4G6">
    <property type="development level" value="Tbio"/>
</dbReference>
<dbReference type="PRO" id="PR:Q9Y4G6"/>
<dbReference type="Proteomes" id="UP000005640">
    <property type="component" value="Chromosome 15"/>
</dbReference>
<dbReference type="RNAct" id="Q9Y4G6">
    <property type="molecule type" value="protein"/>
</dbReference>
<dbReference type="Bgee" id="ENSG00000171914">
    <property type="expression patterns" value="Expressed in sural nerve and 180 other cell types or tissues"/>
</dbReference>
<dbReference type="ExpressionAtlas" id="Q9Y4G6">
    <property type="expression patterns" value="baseline and differential"/>
</dbReference>
<dbReference type="GO" id="GO:0015629">
    <property type="term" value="C:actin cytoskeleton"/>
    <property type="evidence" value="ECO:0000303"/>
    <property type="project" value="UniProtKB"/>
</dbReference>
<dbReference type="GO" id="GO:0005737">
    <property type="term" value="C:cytoplasm"/>
    <property type="evidence" value="ECO:0000318"/>
    <property type="project" value="GO_Central"/>
</dbReference>
<dbReference type="GO" id="GO:0005925">
    <property type="term" value="C:focal adhesion"/>
    <property type="evidence" value="ECO:0007005"/>
    <property type="project" value="UniProtKB"/>
</dbReference>
<dbReference type="GO" id="GO:0005886">
    <property type="term" value="C:plasma membrane"/>
    <property type="evidence" value="ECO:0000318"/>
    <property type="project" value="GO_Central"/>
</dbReference>
<dbReference type="GO" id="GO:0098793">
    <property type="term" value="C:presynapse"/>
    <property type="evidence" value="ECO:0007669"/>
    <property type="project" value="Ensembl"/>
</dbReference>
<dbReference type="GO" id="GO:0001726">
    <property type="term" value="C:ruffle"/>
    <property type="evidence" value="ECO:0007669"/>
    <property type="project" value="InterPro"/>
</dbReference>
<dbReference type="GO" id="GO:0045202">
    <property type="term" value="C:synapse"/>
    <property type="evidence" value="ECO:0000303"/>
    <property type="project" value="UniProtKB"/>
</dbReference>
<dbReference type="GO" id="GO:0003779">
    <property type="term" value="F:actin binding"/>
    <property type="evidence" value="ECO:0000303"/>
    <property type="project" value="UniProtKB"/>
</dbReference>
<dbReference type="GO" id="GO:0051015">
    <property type="term" value="F:actin filament binding"/>
    <property type="evidence" value="ECO:0007669"/>
    <property type="project" value="InterPro"/>
</dbReference>
<dbReference type="GO" id="GO:0005178">
    <property type="term" value="F:integrin binding"/>
    <property type="evidence" value="ECO:0000318"/>
    <property type="project" value="GO_Central"/>
</dbReference>
<dbReference type="GO" id="GO:0005200">
    <property type="term" value="F:structural constituent of cytoskeleton"/>
    <property type="evidence" value="ECO:0007669"/>
    <property type="project" value="InterPro"/>
</dbReference>
<dbReference type="GO" id="GO:0005198">
    <property type="term" value="F:structural molecule activity"/>
    <property type="evidence" value="ECO:0000303"/>
    <property type="project" value="UniProtKB"/>
</dbReference>
<dbReference type="GO" id="GO:0007155">
    <property type="term" value="P:cell adhesion"/>
    <property type="evidence" value="ECO:0000303"/>
    <property type="project" value="UniProtKB"/>
</dbReference>
<dbReference type="GO" id="GO:0098609">
    <property type="term" value="P:cell-cell adhesion"/>
    <property type="evidence" value="ECO:0000318"/>
    <property type="project" value="GO_Central"/>
</dbReference>
<dbReference type="GO" id="GO:0007043">
    <property type="term" value="P:cell-cell junction assembly"/>
    <property type="evidence" value="ECO:0000304"/>
    <property type="project" value="UniProtKB"/>
</dbReference>
<dbReference type="GO" id="GO:0099140">
    <property type="term" value="P:presynaptic actin cytoskeleton organization"/>
    <property type="evidence" value="ECO:0000314"/>
    <property type="project" value="SynGO"/>
</dbReference>
<dbReference type="CDD" id="cd14473">
    <property type="entry name" value="FERM_B-lobe"/>
    <property type="match status" value="1"/>
</dbReference>
<dbReference type="CDD" id="cd10569">
    <property type="entry name" value="FERM_C_Talin"/>
    <property type="match status" value="1"/>
</dbReference>
<dbReference type="CDD" id="cd17172">
    <property type="entry name" value="FERM_F0_TLN2"/>
    <property type="match status" value="1"/>
</dbReference>
<dbReference type="CDD" id="cd17174">
    <property type="entry name" value="FERM_F1_TLN2"/>
    <property type="match status" value="1"/>
</dbReference>
<dbReference type="CDD" id="cd12150">
    <property type="entry name" value="talin-RS"/>
    <property type="match status" value="1"/>
</dbReference>
<dbReference type="FunFam" id="1.20.120.230:FF:000005">
    <property type="entry name" value="Talin 1"/>
    <property type="match status" value="1"/>
</dbReference>
<dbReference type="FunFam" id="3.10.20.90:FF:000066">
    <property type="entry name" value="Talin 1"/>
    <property type="match status" value="1"/>
</dbReference>
<dbReference type="FunFam" id="1.20.120.230:FF:000002">
    <property type="entry name" value="Talin 2"/>
    <property type="match status" value="1"/>
</dbReference>
<dbReference type="FunFam" id="1.20.120.230:FF:000003">
    <property type="entry name" value="Talin 2"/>
    <property type="match status" value="1"/>
</dbReference>
<dbReference type="FunFam" id="1.20.120.230:FF:000004">
    <property type="entry name" value="Talin 2"/>
    <property type="match status" value="1"/>
</dbReference>
<dbReference type="FunFam" id="1.20.120.230:FF:000009">
    <property type="entry name" value="Talin 2"/>
    <property type="match status" value="1"/>
</dbReference>
<dbReference type="FunFam" id="1.20.1410.10:FF:000001">
    <property type="entry name" value="Talin 2"/>
    <property type="match status" value="1"/>
</dbReference>
<dbReference type="FunFam" id="1.20.1420.10:FF:000001">
    <property type="entry name" value="Talin 2"/>
    <property type="match status" value="1"/>
</dbReference>
<dbReference type="FunFam" id="1.20.1420.10:FF:000002">
    <property type="entry name" value="Talin 2"/>
    <property type="match status" value="1"/>
</dbReference>
<dbReference type="FunFam" id="1.20.1420.10:FF:000004">
    <property type="entry name" value="Talin 2"/>
    <property type="match status" value="1"/>
</dbReference>
<dbReference type="FunFam" id="1.20.1420.10:FF:000005">
    <property type="entry name" value="Talin 2"/>
    <property type="match status" value="1"/>
</dbReference>
<dbReference type="FunFam" id="1.20.1420.10:FF:000006">
    <property type="entry name" value="Talin 2"/>
    <property type="match status" value="1"/>
</dbReference>
<dbReference type="FunFam" id="1.20.1420.10:FF:000007">
    <property type="entry name" value="Talin 2"/>
    <property type="match status" value="1"/>
</dbReference>
<dbReference type="FunFam" id="1.20.80.10:FF:000007">
    <property type="entry name" value="Talin 2"/>
    <property type="match status" value="1"/>
</dbReference>
<dbReference type="FunFam" id="2.30.29.30:FF:000028">
    <property type="entry name" value="Talin 2"/>
    <property type="match status" value="1"/>
</dbReference>
<dbReference type="FunFam" id="3.10.20.90:FF:000028">
    <property type="entry name" value="Talin 2"/>
    <property type="match status" value="1"/>
</dbReference>
<dbReference type="Gene3D" id="1.20.80.10">
    <property type="match status" value="1"/>
</dbReference>
<dbReference type="Gene3D" id="1.20.120.230">
    <property type="entry name" value="Alpha-catenin/vinculin-like"/>
    <property type="match status" value="5"/>
</dbReference>
<dbReference type="Gene3D" id="1.20.1410.10">
    <property type="entry name" value="I/LWEQ domain"/>
    <property type="match status" value="1"/>
</dbReference>
<dbReference type="Gene3D" id="3.10.20.90">
    <property type="entry name" value="Phosphatidylinositol 3-kinase Catalytic Subunit, Chain A, domain 1"/>
    <property type="match status" value="2"/>
</dbReference>
<dbReference type="Gene3D" id="2.30.29.30">
    <property type="entry name" value="Pleckstrin-homology domain (PH domain)/Phosphotyrosine-binding domain (PTB)"/>
    <property type="match status" value="1"/>
</dbReference>
<dbReference type="Gene3D" id="1.20.1420.10">
    <property type="entry name" value="Talin, central domain"/>
    <property type="match status" value="7"/>
</dbReference>
<dbReference type="InterPro" id="IPR036723">
    <property type="entry name" value="Alpha-catenin/vinculin-like_sf"/>
</dbReference>
<dbReference type="InterPro" id="IPR019749">
    <property type="entry name" value="Band_41_domain"/>
</dbReference>
<dbReference type="InterPro" id="IPR014352">
    <property type="entry name" value="FERM/acyl-CoA-bd_prot_sf"/>
</dbReference>
<dbReference type="InterPro" id="IPR035963">
    <property type="entry name" value="FERM_2"/>
</dbReference>
<dbReference type="InterPro" id="IPR019748">
    <property type="entry name" value="FERM_central"/>
</dbReference>
<dbReference type="InterPro" id="IPR019747">
    <property type="entry name" value="FERM_CS"/>
</dbReference>
<dbReference type="InterPro" id="IPR000299">
    <property type="entry name" value="FERM_domain"/>
</dbReference>
<dbReference type="InterPro" id="IPR032425">
    <property type="entry name" value="FERM_f0"/>
</dbReference>
<dbReference type="InterPro" id="IPR018979">
    <property type="entry name" value="FERM_N"/>
</dbReference>
<dbReference type="InterPro" id="IPR035964">
    <property type="entry name" value="I/LWEQ_dom_sf"/>
</dbReference>
<dbReference type="InterPro" id="IPR002558">
    <property type="entry name" value="ILWEQ_dom"/>
</dbReference>
<dbReference type="InterPro" id="IPR002404">
    <property type="entry name" value="IRS_PTB"/>
</dbReference>
<dbReference type="InterPro" id="IPR011993">
    <property type="entry name" value="PH-like_dom_sf"/>
</dbReference>
<dbReference type="InterPro" id="IPR037438">
    <property type="entry name" value="Talin1/2-RS"/>
</dbReference>
<dbReference type="InterPro" id="IPR015224">
    <property type="entry name" value="Talin_cent"/>
</dbReference>
<dbReference type="InterPro" id="IPR036476">
    <property type="entry name" value="Talin_cent_sf"/>
</dbReference>
<dbReference type="InterPro" id="IPR054082">
    <property type="entry name" value="Talin_IBS2B"/>
</dbReference>
<dbReference type="InterPro" id="IPR049108">
    <property type="entry name" value="Talin_R4"/>
</dbReference>
<dbReference type="InterPro" id="IPR054060">
    <property type="entry name" value="TLN1-like_RS"/>
</dbReference>
<dbReference type="InterPro" id="IPR029071">
    <property type="entry name" value="Ubiquitin-like_domsf"/>
</dbReference>
<dbReference type="InterPro" id="IPR015009">
    <property type="entry name" value="Vinculin-bd_dom"/>
</dbReference>
<dbReference type="PANTHER" id="PTHR19981">
    <property type="entry name" value="TALIN"/>
    <property type="match status" value="1"/>
</dbReference>
<dbReference type="PANTHER" id="PTHR19981:SF34">
    <property type="entry name" value="TALIN-2"/>
    <property type="match status" value="1"/>
</dbReference>
<dbReference type="Pfam" id="PF16511">
    <property type="entry name" value="FERM_f0"/>
    <property type="match status" value="1"/>
</dbReference>
<dbReference type="Pfam" id="PF00373">
    <property type="entry name" value="FERM_M"/>
    <property type="match status" value="1"/>
</dbReference>
<dbReference type="Pfam" id="PF09379">
    <property type="entry name" value="FERM_N"/>
    <property type="match status" value="1"/>
</dbReference>
<dbReference type="Pfam" id="PF01608">
    <property type="entry name" value="I_LWEQ"/>
    <property type="match status" value="2"/>
</dbReference>
<dbReference type="Pfam" id="PF02174">
    <property type="entry name" value="IRS"/>
    <property type="match status" value="1"/>
</dbReference>
<dbReference type="Pfam" id="PF21896">
    <property type="entry name" value="Talin_IBS2B"/>
    <property type="match status" value="3"/>
</dbReference>
<dbReference type="Pfam" id="PF09141">
    <property type="entry name" value="Talin_middle"/>
    <property type="match status" value="1"/>
</dbReference>
<dbReference type="Pfam" id="PF21692">
    <property type="entry name" value="Talin_R4"/>
    <property type="match status" value="1"/>
</dbReference>
<dbReference type="Pfam" id="PF25177">
    <property type="entry name" value="Talin_VBS2"/>
    <property type="match status" value="1"/>
</dbReference>
<dbReference type="Pfam" id="PF21865">
    <property type="entry name" value="TLN1-like_RS"/>
    <property type="match status" value="3"/>
</dbReference>
<dbReference type="Pfam" id="PF08913">
    <property type="entry name" value="VBS"/>
    <property type="match status" value="1"/>
</dbReference>
<dbReference type="SMART" id="SM00295">
    <property type="entry name" value="B41"/>
    <property type="match status" value="1"/>
</dbReference>
<dbReference type="SMART" id="SM00307">
    <property type="entry name" value="ILWEQ"/>
    <property type="match status" value="1"/>
</dbReference>
<dbReference type="SMART" id="SM01244">
    <property type="entry name" value="IRS"/>
    <property type="match status" value="1"/>
</dbReference>
<dbReference type="SUPFAM" id="SSF109880">
    <property type="entry name" value="A middle domain of Talin 1"/>
    <property type="match status" value="1"/>
</dbReference>
<dbReference type="SUPFAM" id="SSF47220">
    <property type="entry name" value="alpha-catenin/vinculin-like"/>
    <property type="match status" value="5"/>
</dbReference>
<dbReference type="SUPFAM" id="SSF109885">
    <property type="entry name" value="I/LWEQ domain"/>
    <property type="match status" value="4"/>
</dbReference>
<dbReference type="SUPFAM" id="SSF50729">
    <property type="entry name" value="PH domain-like"/>
    <property type="match status" value="1"/>
</dbReference>
<dbReference type="SUPFAM" id="SSF47031">
    <property type="entry name" value="Second domain of FERM"/>
    <property type="match status" value="1"/>
</dbReference>
<dbReference type="SUPFAM" id="SSF54236">
    <property type="entry name" value="Ubiquitin-like"/>
    <property type="match status" value="1"/>
</dbReference>
<dbReference type="PROSITE" id="PS00661">
    <property type="entry name" value="FERM_2"/>
    <property type="match status" value="1"/>
</dbReference>
<dbReference type="PROSITE" id="PS50057">
    <property type="entry name" value="FERM_3"/>
    <property type="match status" value="1"/>
</dbReference>
<dbReference type="PROSITE" id="PS50945">
    <property type="entry name" value="I_LWEQ"/>
    <property type="match status" value="1"/>
</dbReference>
<proteinExistence type="evidence at protein level"/>